<organism>
    <name type="scientific">Sus scrofa</name>
    <name type="common">Pig</name>
    <dbReference type="NCBI Taxonomy" id="9823"/>
    <lineage>
        <taxon>Eukaryota</taxon>
        <taxon>Metazoa</taxon>
        <taxon>Chordata</taxon>
        <taxon>Craniata</taxon>
        <taxon>Vertebrata</taxon>
        <taxon>Euteleostomi</taxon>
        <taxon>Mammalia</taxon>
        <taxon>Eutheria</taxon>
        <taxon>Laurasiatheria</taxon>
        <taxon>Artiodactyla</taxon>
        <taxon>Suina</taxon>
        <taxon>Suidae</taxon>
        <taxon>Sus</taxon>
    </lineage>
</organism>
<reference key="1">
    <citation type="journal article" date="1992" name="Gene">
        <title>The sequence of a porcine cDNA encoding alpha-lactalbumin.</title>
        <authorList>
            <person name="Das Gupta N.A."/>
            <person name="Alexander L.J."/>
            <person name="Beattie C.W."/>
        </authorList>
    </citation>
    <scope>NUCLEOTIDE SEQUENCE [MRNA]</scope>
</reference>
<reference key="2">
    <citation type="journal article" date="1990" name="Biol. Chem. Hoppe-Seyler">
        <title>The complete primary structure of alpha-lactalbumin isolated from pig (Sus scrofa) milk.</title>
        <authorList>
            <person name="Godovac-Zimmermann J."/>
            <person name="Conti A."/>
            <person name="Napolitano L."/>
        </authorList>
    </citation>
    <scope>PROTEIN SEQUENCE OF 20-141</scope>
</reference>
<accession>P18137</accession>
<feature type="signal peptide" evidence="3">
    <location>
        <begin position="1"/>
        <end position="19"/>
    </location>
</feature>
<feature type="chain" id="PRO_0000018447" description="Alpha-lactalbumin">
    <location>
        <begin position="20"/>
        <end position="141"/>
    </location>
</feature>
<feature type="domain" description="C-type lysozyme" evidence="2">
    <location>
        <begin position="20"/>
        <end position="141"/>
    </location>
</feature>
<feature type="binding site" evidence="1">
    <location>
        <position position="97"/>
    </location>
    <ligand>
        <name>Ca(2+)</name>
        <dbReference type="ChEBI" id="CHEBI:29108"/>
    </ligand>
</feature>
<feature type="binding site" evidence="1">
    <location>
        <position position="100"/>
    </location>
    <ligand>
        <name>Ca(2+)</name>
        <dbReference type="ChEBI" id="CHEBI:29108"/>
    </ligand>
</feature>
<feature type="binding site" evidence="1">
    <location>
        <position position="102"/>
    </location>
    <ligand>
        <name>Ca(2+)</name>
        <dbReference type="ChEBI" id="CHEBI:29108"/>
    </ligand>
</feature>
<feature type="binding site" evidence="1">
    <location>
        <position position="105"/>
    </location>
    <ligand>
        <name>Ca(2+)</name>
        <dbReference type="ChEBI" id="CHEBI:29108"/>
    </ligand>
</feature>
<feature type="binding site" evidence="1">
    <location>
        <position position="106"/>
    </location>
    <ligand>
        <name>Ca(2+)</name>
        <dbReference type="ChEBI" id="CHEBI:29108"/>
    </ligand>
</feature>
<feature type="disulfide bond" evidence="2">
    <location>
        <begin position="25"/>
        <end position="138"/>
    </location>
</feature>
<feature type="disulfide bond" evidence="2">
    <location>
        <begin position="47"/>
        <end position="129"/>
    </location>
</feature>
<feature type="disulfide bond" evidence="2">
    <location>
        <begin position="80"/>
        <end position="95"/>
    </location>
</feature>
<feature type="disulfide bond" evidence="2">
    <location>
        <begin position="91"/>
        <end position="109"/>
    </location>
</feature>
<feature type="sequence conflict" description="In Ref. 2; AA sequence." evidence="4" ref="2">
    <original>HD</original>
    <variation>SN</variation>
    <location>
        <begin position="62"/>
        <end position="63"/>
    </location>
</feature>
<feature type="sequence conflict" description="In Ref. 2; AA sequence." evidence="4" ref="2">
    <original>M</original>
    <variation>D</variation>
    <location>
        <position position="107"/>
    </location>
</feature>
<feature type="sequence conflict" description="In Ref. 2; AA sequence." evidence="4" ref="2">
    <original>M</original>
    <variation>L</variation>
    <location>
        <position position="141"/>
    </location>
</feature>
<keyword id="KW-0106">Calcium</keyword>
<keyword id="KW-0903">Direct protein sequencing</keyword>
<keyword id="KW-1015">Disulfide bond</keyword>
<keyword id="KW-0422">Lactose biosynthesis</keyword>
<keyword id="KW-0479">Metal-binding</keyword>
<keyword id="KW-0494">Milk protein</keyword>
<keyword id="KW-1185">Reference proteome</keyword>
<keyword id="KW-0964">Secreted</keyword>
<keyword id="KW-0732">Signal</keyword>
<proteinExistence type="evidence at protein level"/>
<dbReference type="EMBL" id="M80520">
    <property type="protein sequence ID" value="AAA31060.1"/>
    <property type="molecule type" value="mRNA"/>
</dbReference>
<dbReference type="PIR" id="JH0264">
    <property type="entry name" value="LAPG"/>
</dbReference>
<dbReference type="RefSeq" id="NP_999525.1">
    <property type="nucleotide sequence ID" value="NM_214360.1"/>
</dbReference>
<dbReference type="SMR" id="P18137"/>
<dbReference type="FunCoup" id="P18137">
    <property type="interactions" value="159"/>
</dbReference>
<dbReference type="STRING" id="9823.ENSSSCP00000024183"/>
<dbReference type="PaxDb" id="9823-ENSSSCP00000024183"/>
<dbReference type="PeptideAtlas" id="P18137"/>
<dbReference type="Ensembl" id="ENSSSCT00000025257.3">
    <property type="protein sequence ID" value="ENSSSCP00000024183.1"/>
    <property type="gene ID" value="ENSSSCG00000024573.3"/>
</dbReference>
<dbReference type="Ensembl" id="ENSSSCT00015071737.1">
    <property type="protein sequence ID" value="ENSSSCP00015028751.1"/>
    <property type="gene ID" value="ENSSSCG00015053812.1"/>
</dbReference>
<dbReference type="Ensembl" id="ENSSSCT00025079522.1">
    <property type="protein sequence ID" value="ENSSSCP00025034521.1"/>
    <property type="gene ID" value="ENSSSCG00025058072.1"/>
</dbReference>
<dbReference type="Ensembl" id="ENSSSCT00030092348.1">
    <property type="protein sequence ID" value="ENSSSCP00030042493.1"/>
    <property type="gene ID" value="ENSSSCG00030066079.1"/>
</dbReference>
<dbReference type="Ensembl" id="ENSSSCT00035091014.1">
    <property type="protein sequence ID" value="ENSSSCP00035038154.1"/>
    <property type="gene ID" value="ENSSSCG00035067467.1"/>
</dbReference>
<dbReference type="Ensembl" id="ENSSSCT00040099823.1">
    <property type="protein sequence ID" value="ENSSSCP00040044797.1"/>
    <property type="gene ID" value="ENSSSCG00040072476.1"/>
</dbReference>
<dbReference type="Ensembl" id="ENSSSCT00050063597.1">
    <property type="protein sequence ID" value="ENSSSCP00050027322.1"/>
    <property type="gene ID" value="ENSSSCG00050046729.1"/>
</dbReference>
<dbReference type="Ensembl" id="ENSSSCT00055001666.1">
    <property type="protein sequence ID" value="ENSSSCP00055001255.1"/>
    <property type="gene ID" value="ENSSSCG00055000939.1"/>
</dbReference>
<dbReference type="Ensembl" id="ENSSSCT00060055234.1">
    <property type="protein sequence ID" value="ENSSSCP00060023591.1"/>
    <property type="gene ID" value="ENSSSCG00060040757.1"/>
</dbReference>
<dbReference type="Ensembl" id="ENSSSCT00065048580.1">
    <property type="protein sequence ID" value="ENSSSCP00065020974.1"/>
    <property type="gene ID" value="ENSSSCG00065035655.1"/>
</dbReference>
<dbReference type="Ensembl" id="ENSSSCT00070015251.1">
    <property type="protein sequence ID" value="ENSSSCP00070012608.1"/>
    <property type="gene ID" value="ENSSSCG00070007907.1"/>
</dbReference>
<dbReference type="Ensembl" id="ENSSSCT00090038505">
    <property type="protein sequence ID" value="ENSSSCP00090023960"/>
    <property type="gene ID" value="ENSSSCG00090021733"/>
</dbReference>
<dbReference type="Ensembl" id="ENSSSCT00105024483">
    <property type="protein sequence ID" value="ENSSSCP00105017442"/>
    <property type="gene ID" value="ENSSSCG00105012500"/>
</dbReference>
<dbReference type="Ensembl" id="ENSSSCT00110002923">
    <property type="protein sequence ID" value="ENSSSCP00110002286"/>
    <property type="gene ID" value="ENSSSCG00110001435"/>
</dbReference>
<dbReference type="Ensembl" id="ENSSSCT00115009598">
    <property type="protein sequence ID" value="ENSSSCP00115009023"/>
    <property type="gene ID" value="ENSSSCG00115005564"/>
</dbReference>
<dbReference type="GeneID" id="397647"/>
<dbReference type="KEGG" id="ssc:397647"/>
<dbReference type="CTD" id="3906"/>
<dbReference type="VGNC" id="VGNC:89618">
    <property type="gene designation" value="LALBA"/>
</dbReference>
<dbReference type="eggNOG" id="ENOG502T8BJ">
    <property type="taxonomic scope" value="Eukaryota"/>
</dbReference>
<dbReference type="GeneTree" id="ENSGT00940000161726"/>
<dbReference type="HOGENOM" id="CLU_111620_0_1_1"/>
<dbReference type="InParanoid" id="P18137"/>
<dbReference type="OMA" id="PEWICTI"/>
<dbReference type="OrthoDB" id="17373at2759"/>
<dbReference type="TreeFam" id="TF324882"/>
<dbReference type="Reactome" id="R-SSC-5653890">
    <property type="pathway name" value="Lactose synthesis"/>
</dbReference>
<dbReference type="Proteomes" id="UP000008227">
    <property type="component" value="Chromosome 5"/>
</dbReference>
<dbReference type="Proteomes" id="UP000314985">
    <property type="component" value="Chromosome 5"/>
</dbReference>
<dbReference type="Proteomes" id="UP000694570">
    <property type="component" value="Unplaced"/>
</dbReference>
<dbReference type="Proteomes" id="UP000694571">
    <property type="component" value="Unplaced"/>
</dbReference>
<dbReference type="Proteomes" id="UP000694720">
    <property type="component" value="Unplaced"/>
</dbReference>
<dbReference type="Proteomes" id="UP000694722">
    <property type="component" value="Unplaced"/>
</dbReference>
<dbReference type="Proteomes" id="UP000694723">
    <property type="component" value="Unplaced"/>
</dbReference>
<dbReference type="Proteomes" id="UP000694724">
    <property type="component" value="Unplaced"/>
</dbReference>
<dbReference type="Proteomes" id="UP000694725">
    <property type="component" value="Unplaced"/>
</dbReference>
<dbReference type="Proteomes" id="UP000694726">
    <property type="component" value="Unplaced"/>
</dbReference>
<dbReference type="Proteomes" id="UP000694727">
    <property type="component" value="Unplaced"/>
</dbReference>
<dbReference type="Proteomes" id="UP000694728">
    <property type="component" value="Unplaced"/>
</dbReference>
<dbReference type="Bgee" id="ENSSSCG00000024573">
    <property type="expression patterns" value="Expressed in oocyte and 1 other cell type or tissue"/>
</dbReference>
<dbReference type="GO" id="GO:0005576">
    <property type="term" value="C:extracellular region"/>
    <property type="evidence" value="ECO:0007669"/>
    <property type="project" value="UniProtKB-SubCell"/>
</dbReference>
<dbReference type="GO" id="GO:0032991">
    <property type="term" value="C:protein-containing complex"/>
    <property type="evidence" value="ECO:0007669"/>
    <property type="project" value="Ensembl"/>
</dbReference>
<dbReference type="GO" id="GO:0005509">
    <property type="term" value="F:calcium ion binding"/>
    <property type="evidence" value="ECO:0007669"/>
    <property type="project" value="InterPro"/>
</dbReference>
<dbReference type="GO" id="GO:0004461">
    <property type="term" value="F:lactose synthase activity"/>
    <property type="evidence" value="ECO:0007669"/>
    <property type="project" value="Ensembl"/>
</dbReference>
<dbReference type="GO" id="GO:0003796">
    <property type="term" value="F:lysozyme activity"/>
    <property type="evidence" value="ECO:0000318"/>
    <property type="project" value="GO_Central"/>
</dbReference>
<dbReference type="GO" id="GO:0050829">
    <property type="term" value="P:defense response to Gram-negative bacterium"/>
    <property type="evidence" value="ECO:0000318"/>
    <property type="project" value="GO_Central"/>
</dbReference>
<dbReference type="GO" id="GO:0050830">
    <property type="term" value="P:defense response to Gram-positive bacterium"/>
    <property type="evidence" value="ECO:0000318"/>
    <property type="project" value="GO_Central"/>
</dbReference>
<dbReference type="GO" id="GO:0005989">
    <property type="term" value="P:lactose biosynthetic process"/>
    <property type="evidence" value="ECO:0007669"/>
    <property type="project" value="UniProtKB-KW"/>
</dbReference>
<dbReference type="FunFam" id="1.10.530.10:FF:000014">
    <property type="entry name" value="Alpha-lactalbumin"/>
    <property type="match status" value="1"/>
</dbReference>
<dbReference type="Gene3D" id="1.10.530.10">
    <property type="match status" value="1"/>
</dbReference>
<dbReference type="InterPro" id="IPR001916">
    <property type="entry name" value="Glyco_hydro_22"/>
</dbReference>
<dbReference type="InterPro" id="IPR019799">
    <property type="entry name" value="Glyco_hydro_22_CS"/>
</dbReference>
<dbReference type="InterPro" id="IPR000545">
    <property type="entry name" value="Lactalbumin"/>
</dbReference>
<dbReference type="InterPro" id="IPR023346">
    <property type="entry name" value="Lysozyme-like_dom_sf"/>
</dbReference>
<dbReference type="PANTHER" id="PTHR11407:SF32">
    <property type="entry name" value="ALPHA-LACTALBUMIN"/>
    <property type="match status" value="1"/>
</dbReference>
<dbReference type="PANTHER" id="PTHR11407">
    <property type="entry name" value="LYSOZYME C"/>
    <property type="match status" value="1"/>
</dbReference>
<dbReference type="Pfam" id="PF00062">
    <property type="entry name" value="Lys"/>
    <property type="match status" value="1"/>
</dbReference>
<dbReference type="PRINTS" id="PR00136">
    <property type="entry name" value="LACTALBUMIN"/>
</dbReference>
<dbReference type="PRINTS" id="PR00135">
    <property type="entry name" value="LYZLACT"/>
</dbReference>
<dbReference type="SMART" id="SM00263">
    <property type="entry name" value="LYZ1"/>
    <property type="match status" value="1"/>
</dbReference>
<dbReference type="SUPFAM" id="SSF53955">
    <property type="entry name" value="Lysozyme-like"/>
    <property type="match status" value="1"/>
</dbReference>
<dbReference type="PROSITE" id="PS00128">
    <property type="entry name" value="GLYCOSYL_HYDROL_F22_1"/>
    <property type="match status" value="1"/>
</dbReference>
<dbReference type="PROSITE" id="PS51348">
    <property type="entry name" value="GLYCOSYL_HYDROL_F22_2"/>
    <property type="match status" value="1"/>
</dbReference>
<evidence type="ECO:0000250" key="1">
    <source>
        <dbReference type="UniProtKB" id="P00711"/>
    </source>
</evidence>
<evidence type="ECO:0000255" key="2">
    <source>
        <dbReference type="PROSITE-ProRule" id="PRU00680"/>
    </source>
</evidence>
<evidence type="ECO:0000269" key="3">
    <source>
    </source>
</evidence>
<evidence type="ECO:0000305" key="4"/>
<gene>
    <name type="primary">LALBA</name>
</gene>
<sequence length="141" mass="16174">MMSFVSLLVVGILFPAIQAKQFTKCELSQVLKDMDGYGDITLPEWICTIFHISGYDTKTIVHDNGSTEYGLFQINNKLWCRDNQIQSKNICGISCDKFLDDDLTDDMMCAKKILDNEGIDYWLAHKALCSEKLDQWLCEKM</sequence>
<name>LALBA_PIG</name>
<comment type="function">
    <text>Regulatory subunit of lactose synthase, changes the substrate specificity of galactosyltransferase in the mammary gland making glucose a good acceptor substrate for this enzyme. This enables LS to synthesize lactose, the major carbohydrate component of milk. In other tissues, galactosyltransferase transfers galactose onto the N-acetylglucosamine of the oligosaccharide chains in glycoproteins.</text>
</comment>
<comment type="subunit">
    <text>Lactose synthase (LS) is a heterodimer of a catalytic component, beta1,4-galactosyltransferase (beta4Gal-T1) and a regulatory component, alpha-lactalbumin (LA).</text>
</comment>
<comment type="subcellular location">
    <subcellularLocation>
        <location>Secreted</location>
    </subcellularLocation>
</comment>
<comment type="tissue specificity">
    <text>Mammary gland specific. Secreted in milk.</text>
</comment>
<comment type="miscellaneous">
    <text>The pig alpha-lactalbumin shows complete loss of both lysozyme functional residues.</text>
</comment>
<comment type="similarity">
    <text evidence="2">Belongs to the glycosyl hydrolase 22 family.</text>
</comment>
<protein>
    <recommendedName>
        <fullName>Alpha-lactalbumin</fullName>
    </recommendedName>
    <alternativeName>
        <fullName>Lactose synthase B protein</fullName>
    </alternativeName>
</protein>